<dbReference type="EMBL" id="EU502921">
    <property type="protein sequence ID" value="ACA81792.1"/>
    <property type="molecule type" value="mRNA"/>
</dbReference>
<dbReference type="EMBL" id="AACD01000103">
    <property type="protein sequence ID" value="EAA57658.1"/>
    <property type="status" value="ALT_SEQ"/>
    <property type="molecule type" value="Genomic_DNA"/>
</dbReference>
<dbReference type="EMBL" id="BN001301">
    <property type="protein sequence ID" value="CBF70354.1"/>
    <property type="molecule type" value="Genomic_DNA"/>
</dbReference>
<dbReference type="RefSeq" id="XP_663621.1">
    <property type="nucleotide sequence ID" value="XM_658529.1"/>
</dbReference>
<dbReference type="SMR" id="C8V329"/>
<dbReference type="FunCoup" id="C8V329">
    <property type="interactions" value="33"/>
</dbReference>
<dbReference type="STRING" id="227321.C8V329"/>
<dbReference type="TCDB" id="2.A.39.2.4">
    <property type="family name" value="the nucleobase:cation symporter-1 (ncs1) family"/>
</dbReference>
<dbReference type="EnsemblFungi" id="CBF70354">
    <property type="protein sequence ID" value="CBF70354"/>
    <property type="gene ID" value="ANIA_10767"/>
</dbReference>
<dbReference type="KEGG" id="ani:ANIA_10765"/>
<dbReference type="VEuPathDB" id="FungiDB:AN10767"/>
<dbReference type="eggNOG" id="ENOG502QQ8Y">
    <property type="taxonomic scope" value="Eukaryota"/>
</dbReference>
<dbReference type="HOGENOM" id="CLU_019836_0_0_1"/>
<dbReference type="InParanoid" id="C8V329"/>
<dbReference type="OMA" id="LWLSANM"/>
<dbReference type="OrthoDB" id="2116389at2759"/>
<dbReference type="Proteomes" id="UP000000560">
    <property type="component" value="Chromosome I"/>
</dbReference>
<dbReference type="GO" id="GO:0005886">
    <property type="term" value="C:plasma membrane"/>
    <property type="evidence" value="ECO:0000318"/>
    <property type="project" value="GO_Central"/>
</dbReference>
<dbReference type="GO" id="GO:0022857">
    <property type="term" value="F:transmembrane transporter activity"/>
    <property type="evidence" value="ECO:0000318"/>
    <property type="project" value="GO_Central"/>
</dbReference>
<dbReference type="GO" id="GO:0006863">
    <property type="term" value="P:purine nucleobase transport"/>
    <property type="evidence" value="ECO:0000314"/>
    <property type="project" value="AspGD"/>
</dbReference>
<dbReference type="CDD" id="cd11484">
    <property type="entry name" value="SLC-NCS1sbd_CobB-like"/>
    <property type="match status" value="1"/>
</dbReference>
<dbReference type="FunFam" id="1.10.4160.10:FF:000002">
    <property type="entry name" value="Purine-cytosine permease fcyB"/>
    <property type="match status" value="1"/>
</dbReference>
<dbReference type="Gene3D" id="1.10.4160.10">
    <property type="entry name" value="Hydantoin permease"/>
    <property type="match status" value="1"/>
</dbReference>
<dbReference type="InterPro" id="IPR001248">
    <property type="entry name" value="Pur-cyt_permease"/>
</dbReference>
<dbReference type="InterPro" id="IPR026030">
    <property type="entry name" value="Pur-cyt_permease_Fcy2/21/22"/>
</dbReference>
<dbReference type="PANTHER" id="PTHR31806">
    <property type="entry name" value="PURINE-CYTOSINE PERMEASE FCY2-RELATED"/>
    <property type="match status" value="1"/>
</dbReference>
<dbReference type="PANTHER" id="PTHR31806:SF1">
    <property type="entry name" value="PURINE-CYTOSINE PERMEASE FCY2-RELATED"/>
    <property type="match status" value="1"/>
</dbReference>
<dbReference type="Pfam" id="PF02133">
    <property type="entry name" value="Transp_cyt_pur"/>
    <property type="match status" value="1"/>
</dbReference>
<dbReference type="PIRSF" id="PIRSF002744">
    <property type="entry name" value="Pur-cyt_permease"/>
    <property type="match status" value="1"/>
</dbReference>
<gene>
    <name type="primary">fcyB</name>
    <name type="ORF">AN10767</name>
</gene>
<proteinExistence type="evidence at protein level"/>
<feature type="chain" id="PRO_0000413173" description="Purine-cytosine permease fcyB">
    <location>
        <begin position="1"/>
        <end position="508"/>
    </location>
</feature>
<feature type="topological domain" description="Cytoplasmic" evidence="1">
    <location>
        <begin position="1"/>
        <end position="72"/>
    </location>
</feature>
<feature type="transmembrane region" description="Helical" evidence="1">
    <location>
        <begin position="73"/>
        <end position="93"/>
    </location>
</feature>
<feature type="topological domain" description="Extracellular" evidence="1">
    <location>
        <begin position="94"/>
        <end position="104"/>
    </location>
</feature>
<feature type="transmembrane region" description="Helical" evidence="1">
    <location>
        <begin position="105"/>
        <end position="125"/>
    </location>
</feature>
<feature type="topological domain" description="Cytoplasmic" evidence="1">
    <location>
        <begin position="126"/>
        <end position="147"/>
    </location>
</feature>
<feature type="transmembrane region" description="Helical" evidence="1">
    <location>
        <begin position="148"/>
        <end position="168"/>
    </location>
</feature>
<feature type="topological domain" description="Extracellular" evidence="1">
    <location>
        <begin position="169"/>
        <end position="177"/>
    </location>
</feature>
<feature type="transmembrane region" description="Helical" evidence="1">
    <location>
        <begin position="178"/>
        <end position="198"/>
    </location>
</feature>
<feature type="topological domain" description="Cytoplasmic" evidence="1">
    <location>
        <begin position="199"/>
        <end position="200"/>
    </location>
</feature>
<feature type="transmembrane region" description="Helical" evidence="1">
    <location>
        <begin position="201"/>
        <end position="221"/>
    </location>
</feature>
<feature type="topological domain" description="Extracellular" evidence="1">
    <location>
        <begin position="222"/>
        <end position="243"/>
    </location>
</feature>
<feature type="transmembrane region" description="Helical" evidence="1">
    <location>
        <begin position="244"/>
        <end position="264"/>
    </location>
</feature>
<feature type="topological domain" description="Cytoplasmic" evidence="1">
    <location>
        <begin position="265"/>
        <end position="278"/>
    </location>
</feature>
<feature type="transmembrane region" description="Helical" evidence="1">
    <location>
        <begin position="279"/>
        <end position="299"/>
    </location>
</feature>
<feature type="topological domain" description="Extracellular" evidence="1">
    <location>
        <begin position="300"/>
        <end position="323"/>
    </location>
</feature>
<feature type="transmembrane region" description="Helical" evidence="1">
    <location>
        <begin position="324"/>
        <end position="344"/>
    </location>
</feature>
<feature type="topological domain" description="Cytoplasmic" evidence="1">
    <location>
        <begin position="345"/>
        <end position="374"/>
    </location>
</feature>
<feature type="transmembrane region" description="Helical" evidence="1">
    <location>
        <begin position="375"/>
        <end position="395"/>
    </location>
</feature>
<feature type="topological domain" description="Extracellular" evidence="1">
    <location>
        <begin position="396"/>
        <end position="404"/>
    </location>
</feature>
<feature type="transmembrane region" description="Helical" evidence="1">
    <location>
        <begin position="405"/>
        <end position="425"/>
    </location>
</feature>
<feature type="topological domain" description="Cytoplasmic" evidence="1">
    <location>
        <begin position="426"/>
        <end position="442"/>
    </location>
</feature>
<feature type="transmembrane region" description="Helical" evidence="1">
    <location>
        <begin position="443"/>
        <end position="463"/>
    </location>
</feature>
<feature type="topological domain" description="Extracellular" evidence="1">
    <location>
        <begin position="464"/>
        <end position="477"/>
    </location>
</feature>
<feature type="transmembrane region" description="Helical" evidence="1">
    <location>
        <begin position="478"/>
        <end position="498"/>
    </location>
</feature>
<feature type="topological domain" description="Cytoplasmic" evidence="1">
    <location>
        <begin position="499"/>
        <end position="508"/>
    </location>
</feature>
<protein>
    <recommendedName>
        <fullName>Purine-cytosine permease fcyB</fullName>
        <shortName>PCP fcyB</shortName>
    </recommendedName>
    <alternativeName>
        <fullName>Cytosine/purine transport protein fcyB</fullName>
    </alternativeName>
    <alternativeName>
        <fullName>Fluorocytosine resistance protein fcyB</fullName>
    </alternativeName>
</protein>
<sequence>MAGAFDFDLEKNPPVVQSTADNSSDGAVPGETFTYGDSTYAKIQRLAAELNIEQRGIERVPAAEQTDTSVFNIGSMWLAANMVVSSFAIGVLGKSVYSLGFVDAILTVLFFNLLGIMTVCFFSCFGPFGLRQMVFSRLWFGWYVTKGFAVLNILACLGWSAANAIVGAQMLHAVNSDVPGFAAILIISICTLLVTFAGYKVVHLYEYWSWIPTFIVFMIILGTFAHSGDFQNIPMGVGTSEMGSVLSFGSAVYGFATGWTSYAADYTVYQPANRSKRKIFLSTWLGLIVPLLFVEMLGVAVMTATDIKGSKYDVGYATSGNGGLIAAVLQPLGGFGDFCLVILALSIVANNCPNFYSVALTVQVLSRYAQRVPRFIWTLFGTGVSIAIAIPGYSHFETVLENFMNFIAYWLAIYSAIAIMDHFVFKRGFSGYVVENFDKREKLPVGIAATIAFGFGVAGMITGMSQPWYVGPIARHAAGGDVGFELGFAFAAFSYLCLRPFEIKFFGR</sequence>
<keyword id="KW-1003">Cell membrane</keyword>
<keyword id="KW-0472">Membrane</keyword>
<keyword id="KW-0597">Phosphoprotein</keyword>
<keyword id="KW-1185">Reference proteome</keyword>
<keyword id="KW-0812">Transmembrane</keyword>
<keyword id="KW-1133">Transmembrane helix</keyword>
<keyword id="KW-0813">Transport</keyword>
<organism>
    <name type="scientific">Emericella nidulans (strain FGSC A4 / ATCC 38163 / CBS 112.46 / NRRL 194 / M139)</name>
    <name type="common">Aspergillus nidulans</name>
    <dbReference type="NCBI Taxonomy" id="227321"/>
    <lineage>
        <taxon>Eukaryota</taxon>
        <taxon>Fungi</taxon>
        <taxon>Dikarya</taxon>
        <taxon>Ascomycota</taxon>
        <taxon>Pezizomycotina</taxon>
        <taxon>Eurotiomycetes</taxon>
        <taxon>Eurotiomycetidae</taxon>
        <taxon>Eurotiales</taxon>
        <taxon>Aspergillaceae</taxon>
        <taxon>Aspergillus</taxon>
        <taxon>Aspergillus subgen. Nidulantes</taxon>
    </lineage>
</organism>
<comment type="function">
    <text evidence="2">This permease has a broad specificity towards purines, and also transports cytosine, but neither uracil nor thymine. Contributes very little in purine uptake. Its major role may be the uptake of cytosine.</text>
</comment>
<comment type="biophysicochemical properties">
    <kinetics>
        <KM evidence="2">7 uM for adenine</KM>
        <KM evidence="2">11.5 uM for guanine</KM>
        <KM evidence="2">20 uM for hypoxanthine</KM>
        <KM evidence="2">20 uM for cytosine</KM>
    </kinetics>
</comment>
<comment type="subcellular location">
    <subcellularLocation>
        <location evidence="2">Cell membrane</location>
        <topology evidence="2">Multi-pass membrane protein</topology>
    </subcellularLocation>
</comment>
<comment type="induction">
    <text evidence="2">Highly induced during germination and drops to a low constant level throughout vegetative development. Repressed by ammonium. Down-regulated by endocytosis in responde to ammonia or the presence of cytosine.</text>
</comment>
<comment type="similarity">
    <text evidence="3">Belongs to the purine-cytosine permease (2.A.39) family.</text>
</comment>
<comment type="sequence caution" evidence="3">
    <conflict type="erroneous gene model prediction">
        <sequence resource="EMBL-CDS" id="EAA57658"/>
    </conflict>
    <text>The predicted gene AN6017 has been split into 2 genes: AN10765 and AN10767.</text>
</comment>
<reference key="1">
    <citation type="journal article" date="2008" name="Mol. Microbiol.">
        <title>The Aspergillus nidulans FcyB cytosine-purine scavenger is highly expressed during germination and in reproductive compartments and is downregulated by endocytosis.</title>
        <authorList>
            <person name="Vlanti A."/>
            <person name="Diallinas G."/>
        </authorList>
    </citation>
    <scope>NUCLEOTIDE SEQUENCE [MRNA]</scope>
    <scope>FUNCTION</scope>
    <scope>SUBCELLULAR LOCATION</scope>
    <scope>INDUCTION</scope>
    <scope>BIOPHYSICOCHEMICAL PROPERTIES</scope>
</reference>
<reference key="2">
    <citation type="journal article" date="2005" name="Nature">
        <title>Sequencing of Aspergillus nidulans and comparative analysis with A. fumigatus and A. oryzae.</title>
        <authorList>
            <person name="Galagan J.E."/>
            <person name="Calvo S.E."/>
            <person name="Cuomo C."/>
            <person name="Ma L.-J."/>
            <person name="Wortman J.R."/>
            <person name="Batzoglou S."/>
            <person name="Lee S.-I."/>
            <person name="Bastuerkmen M."/>
            <person name="Spevak C.C."/>
            <person name="Clutterbuck J."/>
            <person name="Kapitonov V."/>
            <person name="Jurka J."/>
            <person name="Scazzocchio C."/>
            <person name="Farman M.L."/>
            <person name="Butler J."/>
            <person name="Purcell S."/>
            <person name="Harris S."/>
            <person name="Braus G.H."/>
            <person name="Draht O."/>
            <person name="Busch S."/>
            <person name="D'Enfert C."/>
            <person name="Bouchier C."/>
            <person name="Goldman G.H."/>
            <person name="Bell-Pedersen D."/>
            <person name="Griffiths-Jones S."/>
            <person name="Doonan J.H."/>
            <person name="Yu J."/>
            <person name="Vienken K."/>
            <person name="Pain A."/>
            <person name="Freitag M."/>
            <person name="Selker E.U."/>
            <person name="Archer D.B."/>
            <person name="Penalva M.A."/>
            <person name="Oakley B.R."/>
            <person name="Momany M."/>
            <person name="Tanaka T."/>
            <person name="Kumagai T."/>
            <person name="Asai K."/>
            <person name="Machida M."/>
            <person name="Nierman W.C."/>
            <person name="Denning D.W."/>
            <person name="Caddick M.X."/>
            <person name="Hynes M."/>
            <person name="Paoletti M."/>
            <person name="Fischer R."/>
            <person name="Miller B.L."/>
            <person name="Dyer P.S."/>
            <person name="Sachs M.S."/>
            <person name="Osmani S.A."/>
            <person name="Birren B.W."/>
        </authorList>
    </citation>
    <scope>NUCLEOTIDE SEQUENCE [LARGE SCALE GENOMIC DNA]</scope>
    <source>
        <strain>FGSC A4 / ATCC 38163 / CBS 112.46 / NRRL 194 / M139</strain>
    </source>
</reference>
<reference key="3">
    <citation type="journal article" date="2009" name="Fungal Genet. Biol.">
        <title>The 2008 update of the Aspergillus nidulans genome annotation: a community effort.</title>
        <authorList>
            <person name="Wortman J.R."/>
            <person name="Gilsenan J.M."/>
            <person name="Joardar V."/>
            <person name="Deegan J."/>
            <person name="Clutterbuck J."/>
            <person name="Andersen M.R."/>
            <person name="Archer D."/>
            <person name="Bencina M."/>
            <person name="Braus G."/>
            <person name="Coutinho P."/>
            <person name="von Dohren H."/>
            <person name="Doonan J."/>
            <person name="Driessen A.J."/>
            <person name="Durek P."/>
            <person name="Espeso E."/>
            <person name="Fekete E."/>
            <person name="Flipphi M."/>
            <person name="Estrada C.G."/>
            <person name="Geysens S."/>
            <person name="Goldman G."/>
            <person name="de Groot P.W."/>
            <person name="Hansen K."/>
            <person name="Harris S.D."/>
            <person name="Heinekamp T."/>
            <person name="Helmstaedt K."/>
            <person name="Henrissat B."/>
            <person name="Hofmann G."/>
            <person name="Homan T."/>
            <person name="Horio T."/>
            <person name="Horiuchi H."/>
            <person name="James S."/>
            <person name="Jones M."/>
            <person name="Karaffa L."/>
            <person name="Karanyi Z."/>
            <person name="Kato M."/>
            <person name="Keller N."/>
            <person name="Kelly D.E."/>
            <person name="Kiel J.A."/>
            <person name="Kim J.M."/>
            <person name="van der Klei I.J."/>
            <person name="Klis F.M."/>
            <person name="Kovalchuk A."/>
            <person name="Krasevec N."/>
            <person name="Kubicek C.P."/>
            <person name="Liu B."/>
            <person name="Maccabe A."/>
            <person name="Meyer V."/>
            <person name="Mirabito P."/>
            <person name="Miskei M."/>
            <person name="Mos M."/>
            <person name="Mullins J."/>
            <person name="Nelson D.R."/>
            <person name="Nielsen J."/>
            <person name="Oakley B.R."/>
            <person name="Osmani S.A."/>
            <person name="Pakula T."/>
            <person name="Paszewski A."/>
            <person name="Paulsen I."/>
            <person name="Pilsyk S."/>
            <person name="Pocsi I."/>
            <person name="Punt P.J."/>
            <person name="Ram A.F."/>
            <person name="Ren Q."/>
            <person name="Robellet X."/>
            <person name="Robson G."/>
            <person name="Seiboth B."/>
            <person name="van Solingen P."/>
            <person name="Specht T."/>
            <person name="Sun J."/>
            <person name="Taheri-Talesh N."/>
            <person name="Takeshita N."/>
            <person name="Ussery D."/>
            <person name="vanKuyk P.A."/>
            <person name="Visser H."/>
            <person name="van de Vondervoort P.J."/>
            <person name="de Vries R.P."/>
            <person name="Walton J."/>
            <person name="Xiang X."/>
            <person name="Xiong Y."/>
            <person name="Zeng A.P."/>
            <person name="Brandt B.W."/>
            <person name="Cornell M.J."/>
            <person name="van den Hondel C.A."/>
            <person name="Visser J."/>
            <person name="Oliver S.G."/>
            <person name="Turner G."/>
        </authorList>
    </citation>
    <scope>GENOME REANNOTATION</scope>
    <source>
        <strain>FGSC A4 / ATCC 38163 / CBS 112.46 / NRRL 194 / M139</strain>
    </source>
</reference>
<accession>C8V329</accession>
<accession>B1PXD0</accession>
<accession>Q5B0B3</accession>
<evidence type="ECO:0000255" key="1"/>
<evidence type="ECO:0000269" key="2">
    <source>
    </source>
</evidence>
<evidence type="ECO:0000305" key="3"/>
<name>FCY2_EMENI</name>